<sequence length="97" mass="11087">MMTGLWLSWSLNIQKPMFPLRLAQAMPISPAFSFKREFIMAKQAKAKKAVEKKVGDSKRAGYKRGSNSRINQTVEKIMRRARAVLRDDASRFGKQKA</sequence>
<proteinExistence type="predicted"/>
<comment type="caution">
    <text evidence="1">It is uncertain whether Met-1 or Met-26 is the initiator.</text>
</comment>
<comment type="sequence caution" evidence="1">
    <conflict type="erroneous initiation">
        <sequence resource="EMBL-CDS" id="AAA32508"/>
    </conflict>
</comment>
<comment type="sequence caution" evidence="1">
    <conflict type="erroneous initiation">
        <sequence resource="EMBL-CDS" id="AAD42450"/>
    </conflict>
</comment>
<comment type="sequence caution" evidence="1">
    <conflict type="erroneous initiation">
        <sequence resource="EMBL-CDS" id="CAA38407"/>
    </conflict>
</comment>
<gene>
    <name type="primary">y13A</name>
    <name type="synonym">30.9</name>
    <name type="synonym">31.-2</name>
</gene>
<keyword id="KW-1185">Reference proteome</keyword>
<reference key="1">
    <citation type="journal article" date="1990" name="Nucleic Acids Res.">
        <title>Cloning and sequencing of bacteriophage T4 genes between map positions 128.3-130.3.</title>
        <authorList>
            <person name="Prilipov A.G."/>
            <person name="Mesyanzhinov V.V."/>
            <person name="Aebi U."/>
            <person name="Kellenberger E."/>
        </authorList>
    </citation>
    <scope>NUCLEOTIDE SEQUENCE [GENOMIC DNA]</scope>
    <source>
        <strain>D</strain>
    </source>
</reference>
<reference key="2">
    <citation type="journal article" date="1990" name="Nucleic Acids Res.">
        <title>Nucleotide sequence of bacteriophage T4 gene 31 region.</title>
        <authorList>
            <person name="Raudonikiene A."/>
            <person name="Nivinskas R."/>
        </authorList>
    </citation>
    <scope>NUCLEOTIDE SEQUENCE [GENOMIC DNA]</scope>
</reference>
<reference key="3">
    <citation type="journal article" date="1992" name="Gene">
        <title>Gene rIII is the nearest downstream neighbour of bacteriophage T4 gene 31.</title>
        <authorList>
            <person name="Raudonikiene A."/>
            <person name="Nivinskas R."/>
        </authorList>
    </citation>
    <scope>NUCLEOTIDE SEQUENCE [GENOMIC DNA]</scope>
</reference>
<reference key="4">
    <citation type="journal article" date="2003" name="Microbiol. Mol. Biol. Rev.">
        <title>Bacteriophage T4 genome.</title>
        <authorList>
            <person name="Miller E.S."/>
            <person name="Kutter E."/>
            <person name="Mosig G."/>
            <person name="Arisaka F."/>
            <person name="Kunisawa T."/>
            <person name="Ruger W."/>
        </authorList>
    </citation>
    <scope>NUCLEOTIDE SEQUENCE [LARGE SCALE GENOMIC DNA]</scope>
</reference>
<organismHost>
    <name type="scientific">Escherichia coli</name>
    <dbReference type="NCBI Taxonomy" id="562"/>
</organismHost>
<dbReference type="EMBL" id="X17657">
    <property type="protein sequence ID" value="CAA35653.1"/>
    <property type="molecule type" value="Genomic_DNA"/>
</dbReference>
<dbReference type="EMBL" id="M37882">
    <property type="protein sequence ID" value="AAA32508.1"/>
    <property type="status" value="ALT_INIT"/>
    <property type="molecule type" value="Genomic_DNA"/>
</dbReference>
<dbReference type="EMBL" id="X54536">
    <property type="protein sequence ID" value="CAA38407.1"/>
    <property type="status" value="ALT_INIT"/>
    <property type="molecule type" value="Genomic_DNA"/>
</dbReference>
<dbReference type="EMBL" id="AF158101">
    <property type="protein sequence ID" value="AAD42450.1"/>
    <property type="status" value="ALT_INIT"/>
    <property type="molecule type" value="Genomic_DNA"/>
</dbReference>
<dbReference type="PIR" id="JQ0527">
    <property type="entry name" value="JQ0527"/>
</dbReference>
<dbReference type="RefSeq" id="NP_049823.1">
    <property type="nucleotide sequence ID" value="NC_000866.4"/>
</dbReference>
<dbReference type="SMR" id="P17310"/>
<dbReference type="GeneID" id="1258718"/>
<dbReference type="KEGG" id="vg:1258718"/>
<dbReference type="OrthoDB" id="27794at10239"/>
<dbReference type="Proteomes" id="UP000009087">
    <property type="component" value="Segment"/>
</dbReference>
<name>Y13A_BPT4</name>
<accession>P17310</accession>
<accession>Q9T0T5</accession>
<feature type="chain" id="PRO_0000165174" description="Uncharacterized 11.1 kDa protein in Gp30-rIII intergenic region">
    <location>
        <begin position="1"/>
        <end position="97"/>
    </location>
</feature>
<evidence type="ECO:0000305" key="1"/>
<organism>
    <name type="scientific">Enterobacteria phage T4</name>
    <name type="common">Bacteriophage T4</name>
    <dbReference type="NCBI Taxonomy" id="10665"/>
    <lineage>
        <taxon>Viruses</taxon>
        <taxon>Duplodnaviria</taxon>
        <taxon>Heunggongvirae</taxon>
        <taxon>Uroviricota</taxon>
        <taxon>Caudoviricetes</taxon>
        <taxon>Straboviridae</taxon>
        <taxon>Tevenvirinae</taxon>
        <taxon>Tequatrovirus</taxon>
    </lineage>
</organism>
<protein>
    <recommendedName>
        <fullName>Uncharacterized 11.1 kDa protein in Gp30-rIII intergenic region</fullName>
    </recommendedName>
    <alternativeName>
        <fullName>ORF D</fullName>
    </alternativeName>
</protein>